<dbReference type="EMBL" id="AP010918">
    <property type="protein sequence ID" value="BAH24656.1"/>
    <property type="molecule type" value="Genomic_DNA"/>
</dbReference>
<dbReference type="RefSeq" id="WP_010950385.1">
    <property type="nucleotide sequence ID" value="NZ_CP014566.1"/>
</dbReference>
<dbReference type="SMR" id="C1AK27"/>
<dbReference type="KEGG" id="mbt:JTY_0360"/>
<dbReference type="HOGENOM" id="CLU_057217_4_1_11"/>
<dbReference type="GO" id="GO:0005737">
    <property type="term" value="C:cytoplasm"/>
    <property type="evidence" value="ECO:0007669"/>
    <property type="project" value="UniProtKB-SubCell"/>
</dbReference>
<dbReference type="GO" id="GO:0000774">
    <property type="term" value="F:adenyl-nucleotide exchange factor activity"/>
    <property type="evidence" value="ECO:0007669"/>
    <property type="project" value="InterPro"/>
</dbReference>
<dbReference type="GO" id="GO:0042803">
    <property type="term" value="F:protein homodimerization activity"/>
    <property type="evidence" value="ECO:0007669"/>
    <property type="project" value="InterPro"/>
</dbReference>
<dbReference type="GO" id="GO:0051087">
    <property type="term" value="F:protein-folding chaperone binding"/>
    <property type="evidence" value="ECO:0007669"/>
    <property type="project" value="InterPro"/>
</dbReference>
<dbReference type="GO" id="GO:0051082">
    <property type="term" value="F:unfolded protein binding"/>
    <property type="evidence" value="ECO:0007669"/>
    <property type="project" value="TreeGrafter"/>
</dbReference>
<dbReference type="GO" id="GO:0006457">
    <property type="term" value="P:protein folding"/>
    <property type="evidence" value="ECO:0007669"/>
    <property type="project" value="InterPro"/>
</dbReference>
<dbReference type="CDD" id="cd00446">
    <property type="entry name" value="GrpE"/>
    <property type="match status" value="1"/>
</dbReference>
<dbReference type="FunFam" id="2.30.22.10:FF:000007">
    <property type="entry name" value="Protein GrpE"/>
    <property type="match status" value="1"/>
</dbReference>
<dbReference type="FunFam" id="3.90.20.20:FF:000010">
    <property type="entry name" value="Protein GrpE"/>
    <property type="match status" value="1"/>
</dbReference>
<dbReference type="Gene3D" id="3.90.20.20">
    <property type="match status" value="1"/>
</dbReference>
<dbReference type="Gene3D" id="2.30.22.10">
    <property type="entry name" value="Head domain of nucleotide exchange factor GrpE"/>
    <property type="match status" value="1"/>
</dbReference>
<dbReference type="HAMAP" id="MF_01151">
    <property type="entry name" value="GrpE"/>
    <property type="match status" value="1"/>
</dbReference>
<dbReference type="InterPro" id="IPR000740">
    <property type="entry name" value="GrpE"/>
</dbReference>
<dbReference type="InterPro" id="IPR013805">
    <property type="entry name" value="GrpE_coiled_coil"/>
</dbReference>
<dbReference type="InterPro" id="IPR009012">
    <property type="entry name" value="GrpE_head"/>
</dbReference>
<dbReference type="NCBIfam" id="NF010740">
    <property type="entry name" value="PRK14142.1"/>
    <property type="match status" value="1"/>
</dbReference>
<dbReference type="NCBIfam" id="NF010761">
    <property type="entry name" value="PRK14164.1"/>
    <property type="match status" value="1"/>
</dbReference>
<dbReference type="PANTHER" id="PTHR21237">
    <property type="entry name" value="GRPE PROTEIN"/>
    <property type="match status" value="1"/>
</dbReference>
<dbReference type="PANTHER" id="PTHR21237:SF23">
    <property type="entry name" value="GRPE PROTEIN HOMOLOG, MITOCHONDRIAL"/>
    <property type="match status" value="1"/>
</dbReference>
<dbReference type="Pfam" id="PF01025">
    <property type="entry name" value="GrpE"/>
    <property type="match status" value="1"/>
</dbReference>
<dbReference type="PRINTS" id="PR00773">
    <property type="entry name" value="GRPEPROTEIN"/>
</dbReference>
<dbReference type="SUPFAM" id="SSF58014">
    <property type="entry name" value="Coiled-coil domain of nucleotide exchange factor GrpE"/>
    <property type="match status" value="1"/>
</dbReference>
<dbReference type="SUPFAM" id="SSF51064">
    <property type="entry name" value="Head domain of nucleotide exchange factor GrpE"/>
    <property type="match status" value="1"/>
</dbReference>
<dbReference type="PROSITE" id="PS01071">
    <property type="entry name" value="GRPE"/>
    <property type="match status" value="1"/>
</dbReference>
<accession>C1AK27</accession>
<comment type="function">
    <text evidence="1">Participates actively in the response to hyperosmotic and heat shock by preventing the aggregation of stress-denatured proteins, in association with DnaK and GrpE. It is the nucleotide exchange factor for DnaK and may function as a thermosensor. Unfolded proteins bind initially to DnaJ; upon interaction with the DnaJ-bound protein, DnaK hydrolyzes its bound ATP, resulting in the formation of a stable complex. GrpE releases ADP from DnaK; ATP binding to DnaK triggers the release of the substrate protein, thus completing the reaction cycle. Several rounds of ATP-dependent interactions between DnaJ, DnaK and GrpE are required for fully efficient folding.</text>
</comment>
<comment type="subunit">
    <text evidence="1">Homodimer.</text>
</comment>
<comment type="subcellular location">
    <subcellularLocation>
        <location evidence="1">Cytoplasm</location>
    </subcellularLocation>
</comment>
<comment type="similarity">
    <text evidence="1">Belongs to the GrpE family.</text>
</comment>
<feature type="chain" id="PRO_1000164205" description="Protein GrpE">
    <location>
        <begin position="1"/>
        <end position="235"/>
    </location>
</feature>
<feature type="region of interest" description="Disordered" evidence="2">
    <location>
        <begin position="1"/>
        <end position="50"/>
    </location>
</feature>
<feature type="region of interest" description="Disordered" evidence="2">
    <location>
        <begin position="198"/>
        <end position="235"/>
    </location>
</feature>
<feature type="compositionally biased region" description="Polar residues" evidence="2">
    <location>
        <begin position="1"/>
        <end position="18"/>
    </location>
</feature>
<feature type="compositionally biased region" description="Basic and acidic residues" evidence="2">
    <location>
        <begin position="19"/>
        <end position="35"/>
    </location>
</feature>
<protein>
    <recommendedName>
        <fullName evidence="1">Protein GrpE</fullName>
    </recommendedName>
    <alternativeName>
        <fullName evidence="1">HSP-70 cofactor</fullName>
    </alternativeName>
</protein>
<evidence type="ECO:0000255" key="1">
    <source>
        <dbReference type="HAMAP-Rule" id="MF_01151"/>
    </source>
</evidence>
<evidence type="ECO:0000256" key="2">
    <source>
        <dbReference type="SAM" id="MobiDB-lite"/>
    </source>
</evidence>
<organism>
    <name type="scientific">Mycobacterium bovis (strain BCG / Tokyo 172 / ATCC 35737 / TMC 1019)</name>
    <dbReference type="NCBI Taxonomy" id="561275"/>
    <lineage>
        <taxon>Bacteria</taxon>
        <taxon>Bacillati</taxon>
        <taxon>Actinomycetota</taxon>
        <taxon>Actinomycetes</taxon>
        <taxon>Mycobacteriales</taxon>
        <taxon>Mycobacteriaceae</taxon>
        <taxon>Mycobacterium</taxon>
        <taxon>Mycobacterium tuberculosis complex</taxon>
    </lineage>
</organism>
<sequence length="235" mass="24559">MTDGNQKPDGNSGEQVTVTDKRRIDPETGEVRHVPPGDMPGGTAAADAAHTEDKVAELTADLQRVQADFANYRKRALRDQQAAADRAKASVVSQLLGVLDDLERARKHGDLESGPLKSVADKLDSALTGLGLVAFGAEGEDFDPVLHEAVQHEGDGGQGSKPVIGTVMRQGYQLGEQVLRHALVGVVDTVVVDAAELESVDDGTAVADTAENDQADQGNSADTLGEQAESEPSGS</sequence>
<gene>
    <name evidence="1" type="primary">grpE</name>
    <name type="ordered locus">JTY_0360</name>
</gene>
<keyword id="KW-0143">Chaperone</keyword>
<keyword id="KW-0963">Cytoplasm</keyword>
<keyword id="KW-0346">Stress response</keyword>
<reference key="1">
    <citation type="journal article" date="2009" name="Vaccine">
        <title>Whole genome sequence analysis of Mycobacterium bovis bacillus Calmette-Guerin (BCG) Tokyo 172: a comparative study of BCG vaccine substrains.</title>
        <authorList>
            <person name="Seki M."/>
            <person name="Honda I."/>
            <person name="Fujita I."/>
            <person name="Yano I."/>
            <person name="Yamamoto S."/>
            <person name="Koyama A."/>
        </authorList>
    </citation>
    <scope>NUCLEOTIDE SEQUENCE [LARGE SCALE GENOMIC DNA]</scope>
    <source>
        <strain>BCG / Tokyo 172 / ATCC 35737 / TMC 1019</strain>
    </source>
</reference>
<name>GRPE_MYCBT</name>
<proteinExistence type="inferred from homology"/>